<proteinExistence type="inferred from homology"/>
<comment type="function">
    <text evidence="1">One of the primary rRNA binding proteins, it binds directly near the 3'-end of the 23S rRNA, where it nucleates assembly of the 50S subunit.</text>
</comment>
<comment type="subunit">
    <text evidence="1">Part of the 50S ribosomal subunit. Forms a cluster with proteins L14 and L19.</text>
</comment>
<comment type="PTM">
    <text evidence="1">Methylated by PrmB.</text>
</comment>
<comment type="similarity">
    <text evidence="1">Belongs to the universal ribosomal protein uL3 family.</text>
</comment>
<reference key="1">
    <citation type="journal article" date="2003" name="Proc. Natl. Acad. Sci. U.S.A.">
        <title>Reductive genome evolution in Buchnera aphidicola.</title>
        <authorList>
            <person name="van Ham R.C.H.J."/>
            <person name="Kamerbeek J."/>
            <person name="Palacios C."/>
            <person name="Rausell C."/>
            <person name="Abascal F."/>
            <person name="Bastolla U."/>
            <person name="Fernandez J.M."/>
            <person name="Jimenez L."/>
            <person name="Postigo M."/>
            <person name="Silva F.J."/>
            <person name="Tamames J."/>
            <person name="Viguera E."/>
            <person name="Latorre A."/>
            <person name="Valencia A."/>
            <person name="Moran F."/>
            <person name="Moya A."/>
        </authorList>
    </citation>
    <scope>NUCLEOTIDE SEQUENCE [LARGE SCALE GENOMIC DNA]</scope>
    <source>
        <strain>Bp</strain>
    </source>
</reference>
<evidence type="ECO:0000255" key="1">
    <source>
        <dbReference type="HAMAP-Rule" id="MF_01325"/>
    </source>
</evidence>
<evidence type="ECO:0000256" key="2">
    <source>
        <dbReference type="SAM" id="MobiDB-lite"/>
    </source>
</evidence>
<evidence type="ECO:0000305" key="3"/>
<organism>
    <name type="scientific">Buchnera aphidicola subsp. Baizongia pistaciae (strain Bp)</name>
    <dbReference type="NCBI Taxonomy" id="224915"/>
    <lineage>
        <taxon>Bacteria</taxon>
        <taxon>Pseudomonadati</taxon>
        <taxon>Pseudomonadota</taxon>
        <taxon>Gammaproteobacteria</taxon>
        <taxon>Enterobacterales</taxon>
        <taxon>Erwiniaceae</taxon>
        <taxon>Buchnera</taxon>
    </lineage>
</organism>
<feature type="chain" id="PRO_0000077079" description="Large ribosomal subunit protein uL3">
    <location>
        <begin position="1"/>
        <end position="214"/>
    </location>
</feature>
<feature type="region of interest" description="Disordered" evidence="2">
    <location>
        <begin position="134"/>
        <end position="153"/>
    </location>
</feature>
<feature type="modified residue" description="N5-methylglutamine" evidence="1">
    <location>
        <position position="152"/>
    </location>
</feature>
<accession>Q89A68</accession>
<sequence length="214" mass="23499">MMGLIGQKLGMTRIFTEEGTVYPVTIIKVKENRITQIKTISRDLYHAVQVTTGIKKSNKLLKPEIGHFLKSGVKIGKGLWEFKLTNSSINDFKIGQSLNLELFSNIKKVDIIGTSKGKGFCGTVKRWNFHTQDATHGNSLSHRAPGSIGQNQTPGRVFKGKKMAGHLGNHRVTVQNLDIVKIDLNQEIILVKGAVPGYSGGNIIIKPAIKTRGV</sequence>
<keyword id="KW-0488">Methylation</keyword>
<keyword id="KW-1185">Reference proteome</keyword>
<keyword id="KW-0687">Ribonucleoprotein</keyword>
<keyword id="KW-0689">Ribosomal protein</keyword>
<keyword id="KW-0694">RNA-binding</keyword>
<keyword id="KW-0699">rRNA-binding</keyword>
<name>RL3_BUCBP</name>
<gene>
    <name evidence="1" type="primary">rplC</name>
    <name type="ordered locus">bbp_467</name>
</gene>
<protein>
    <recommendedName>
        <fullName evidence="1">Large ribosomal subunit protein uL3</fullName>
    </recommendedName>
    <alternativeName>
        <fullName evidence="3">50S ribosomal protein L3</fullName>
    </alternativeName>
</protein>
<dbReference type="EMBL" id="AE016826">
    <property type="protein sequence ID" value="AAO27173.1"/>
    <property type="molecule type" value="Genomic_DNA"/>
</dbReference>
<dbReference type="RefSeq" id="WP_011091574.1">
    <property type="nucleotide sequence ID" value="NC_004545.1"/>
</dbReference>
<dbReference type="SMR" id="Q89A68"/>
<dbReference type="STRING" id="224915.bbp_467"/>
<dbReference type="KEGG" id="bab:bbp_467"/>
<dbReference type="eggNOG" id="COG0087">
    <property type="taxonomic scope" value="Bacteria"/>
</dbReference>
<dbReference type="HOGENOM" id="CLU_044142_4_1_6"/>
<dbReference type="OrthoDB" id="9806135at2"/>
<dbReference type="Proteomes" id="UP000000601">
    <property type="component" value="Chromosome"/>
</dbReference>
<dbReference type="GO" id="GO:0022625">
    <property type="term" value="C:cytosolic large ribosomal subunit"/>
    <property type="evidence" value="ECO:0007669"/>
    <property type="project" value="TreeGrafter"/>
</dbReference>
<dbReference type="GO" id="GO:0019843">
    <property type="term" value="F:rRNA binding"/>
    <property type="evidence" value="ECO:0007669"/>
    <property type="project" value="UniProtKB-UniRule"/>
</dbReference>
<dbReference type="GO" id="GO:0003735">
    <property type="term" value="F:structural constituent of ribosome"/>
    <property type="evidence" value="ECO:0007669"/>
    <property type="project" value="InterPro"/>
</dbReference>
<dbReference type="GO" id="GO:0006412">
    <property type="term" value="P:translation"/>
    <property type="evidence" value="ECO:0007669"/>
    <property type="project" value="UniProtKB-UniRule"/>
</dbReference>
<dbReference type="FunFam" id="2.40.30.10:FF:000004">
    <property type="entry name" value="50S ribosomal protein L3"/>
    <property type="match status" value="1"/>
</dbReference>
<dbReference type="FunFam" id="3.30.160.810:FF:000001">
    <property type="entry name" value="50S ribosomal protein L3"/>
    <property type="match status" value="1"/>
</dbReference>
<dbReference type="Gene3D" id="3.30.160.810">
    <property type="match status" value="1"/>
</dbReference>
<dbReference type="Gene3D" id="2.40.30.10">
    <property type="entry name" value="Translation factors"/>
    <property type="match status" value="1"/>
</dbReference>
<dbReference type="HAMAP" id="MF_01325_B">
    <property type="entry name" value="Ribosomal_uL3_B"/>
    <property type="match status" value="1"/>
</dbReference>
<dbReference type="InterPro" id="IPR000597">
    <property type="entry name" value="Ribosomal_uL3"/>
</dbReference>
<dbReference type="InterPro" id="IPR019927">
    <property type="entry name" value="Ribosomal_uL3_bac/org-type"/>
</dbReference>
<dbReference type="InterPro" id="IPR019926">
    <property type="entry name" value="Ribosomal_uL3_CS"/>
</dbReference>
<dbReference type="InterPro" id="IPR009000">
    <property type="entry name" value="Transl_B-barrel_sf"/>
</dbReference>
<dbReference type="NCBIfam" id="TIGR03625">
    <property type="entry name" value="L3_bact"/>
    <property type="match status" value="1"/>
</dbReference>
<dbReference type="PANTHER" id="PTHR11229">
    <property type="entry name" value="50S RIBOSOMAL PROTEIN L3"/>
    <property type="match status" value="1"/>
</dbReference>
<dbReference type="PANTHER" id="PTHR11229:SF16">
    <property type="entry name" value="LARGE RIBOSOMAL SUBUNIT PROTEIN UL3C"/>
    <property type="match status" value="1"/>
</dbReference>
<dbReference type="Pfam" id="PF00297">
    <property type="entry name" value="Ribosomal_L3"/>
    <property type="match status" value="1"/>
</dbReference>
<dbReference type="SUPFAM" id="SSF50447">
    <property type="entry name" value="Translation proteins"/>
    <property type="match status" value="1"/>
</dbReference>
<dbReference type="PROSITE" id="PS00474">
    <property type="entry name" value="RIBOSOMAL_L3"/>
    <property type="match status" value="1"/>
</dbReference>